<proteinExistence type="evidence at protein level"/>
<feature type="chain" id="PRO_0000083222" description="Capsid protein">
    <location>
        <begin position="1"/>
        <end position="218"/>
    </location>
</feature>
<feature type="region of interest" description="Disordered" evidence="2">
    <location>
        <begin position="1"/>
        <end position="30"/>
    </location>
</feature>
<feature type="compositionally biased region" description="Low complexity" evidence="2">
    <location>
        <begin position="1"/>
        <end position="10"/>
    </location>
</feature>
<feature type="compositionally biased region" description="Basic residues" evidence="2">
    <location>
        <begin position="11"/>
        <end position="21"/>
    </location>
</feature>
<feature type="modified residue" description="N-acetylmethionine; by host" evidence="3">
    <location>
        <position position="1"/>
    </location>
</feature>
<feature type="sequence conflict" description="In Ref. 4; AAA46407." evidence="4" ref="4">
    <original>S</original>
    <variation>P</variation>
    <location>
        <position position="6"/>
    </location>
</feature>
<feature type="sequence conflict" description="In Ref. 2; AAA46420/BAA02061." evidence="4" ref="2">
    <original>R</original>
    <variation>K</variation>
    <location>
        <position position="76"/>
    </location>
</feature>
<feature type="sequence conflict" description="In Ref. 2; AAA46420/BAA02061." evidence="4" ref="2">
    <original>E</original>
    <variation>G</variation>
    <location>
        <position position="83"/>
    </location>
</feature>
<feature type="sequence conflict" description="In Ref. 2; AAA46420/BAA02061." evidence="4" ref="2">
    <original>M</original>
    <variation>T</variation>
    <location>
        <position position="97"/>
    </location>
</feature>
<feature type="sequence conflict" description="In Ref. 2; AAA46420/BAA02061." evidence="4" ref="2">
    <original>T</original>
    <variation>A</variation>
    <location>
        <position position="193"/>
    </location>
</feature>
<protein>
    <recommendedName>
        <fullName>Capsid protein</fullName>
        <shortName>CP</shortName>
    </recommendedName>
    <alternativeName>
        <fullName>Coat protein</fullName>
    </alternativeName>
</protein>
<comment type="function">
    <text evidence="1">Capsid protein. Probably binds RNA and plays a role in packaging (By similarity).</text>
</comment>
<comment type="subcellular location">
    <subcellularLocation>
        <location evidence="4">Virion</location>
    </subcellularLocation>
</comment>
<comment type="domain">
    <text evidence="1">The N-terminal arginine-rich stretch does not seem to be the major RNA-binding region that allows formation of an infectious ribonucleoprotein complex.</text>
</comment>
<comment type="similarity">
    <text evidence="4">Belongs to the cucumovirus capsid protein family.</text>
</comment>
<organism>
    <name type="scientific">Cucumber mosaic virus (strain Y)</name>
    <name type="common">CMV</name>
    <dbReference type="NCBI Taxonomy" id="12312"/>
    <lineage>
        <taxon>Viruses</taxon>
        <taxon>Riboviria</taxon>
        <taxon>Orthornavirae</taxon>
        <taxon>Kitrinoviricota</taxon>
        <taxon>Alsuviricetes</taxon>
        <taxon>Martellivirales</taxon>
        <taxon>Bromoviridae</taxon>
        <taxon>Cucumovirus</taxon>
        <taxon>Cucumber mosaic virus</taxon>
    </lineage>
</organism>
<dbReference type="EMBL" id="M22710">
    <property type="protein sequence ID" value="AAA46408.1"/>
    <property type="molecule type" value="Genomic_RNA"/>
</dbReference>
<dbReference type="EMBL" id="M57602">
    <property type="protein sequence ID" value="AAA46420.1"/>
    <property type="molecule type" value="Genomic_RNA"/>
</dbReference>
<dbReference type="EMBL" id="D12499">
    <property type="protein sequence ID" value="BAA02061.1"/>
    <property type="molecule type" value="Genomic_RNA"/>
</dbReference>
<dbReference type="EMBL" id="D83958">
    <property type="protein sequence ID" value="BAA12152.1"/>
    <property type="molecule type" value="Genomic_RNA"/>
</dbReference>
<dbReference type="EMBL" id="M29129">
    <property type="protein sequence ID" value="AAA46407.1"/>
    <property type="molecule type" value="mRNA"/>
</dbReference>
<dbReference type="PIR" id="JA0097">
    <property type="entry name" value="VCVXY1"/>
</dbReference>
<dbReference type="SMR" id="P18027"/>
<dbReference type="iPTMnet" id="P18027"/>
<dbReference type="GO" id="GO:1990904">
    <property type="term" value="C:ribonucleoprotein complex"/>
    <property type="evidence" value="ECO:0007669"/>
    <property type="project" value="UniProtKB-KW"/>
</dbReference>
<dbReference type="GO" id="GO:0039617">
    <property type="term" value="C:T=3 icosahedral viral capsid"/>
    <property type="evidence" value="ECO:0007669"/>
    <property type="project" value="UniProtKB-KW"/>
</dbReference>
<dbReference type="GO" id="GO:0019013">
    <property type="term" value="C:viral nucleocapsid"/>
    <property type="evidence" value="ECO:0007669"/>
    <property type="project" value="UniProtKB-KW"/>
</dbReference>
<dbReference type="GO" id="GO:0003723">
    <property type="term" value="F:RNA binding"/>
    <property type="evidence" value="ECO:0007669"/>
    <property type="project" value="UniProtKB-KW"/>
</dbReference>
<dbReference type="GO" id="GO:0005198">
    <property type="term" value="F:structural molecule activity"/>
    <property type="evidence" value="ECO:0007669"/>
    <property type="project" value="InterPro"/>
</dbReference>
<dbReference type="Gene3D" id="2.60.120.530">
    <property type="entry name" value="Cucumovirus coat protein, subunit A"/>
    <property type="match status" value="1"/>
</dbReference>
<dbReference type="InterPro" id="IPR000247">
    <property type="entry name" value="Cucumovirus_coat"/>
</dbReference>
<dbReference type="InterPro" id="IPR037137">
    <property type="entry name" value="Cucumovirus_coat_Asu_sf"/>
</dbReference>
<dbReference type="Pfam" id="PF00760">
    <property type="entry name" value="Cucumo_coat"/>
    <property type="match status" value="1"/>
</dbReference>
<dbReference type="PRINTS" id="PR00222">
    <property type="entry name" value="CUCUMOCOAT"/>
</dbReference>
<dbReference type="SUPFAM" id="SSF88633">
    <property type="entry name" value="Positive stranded ssRNA viruses"/>
    <property type="match status" value="1"/>
</dbReference>
<organismHost>
    <name type="scientific">Cucumis sativus</name>
    <name type="common">Cucumber</name>
    <dbReference type="NCBI Taxonomy" id="3659"/>
</organismHost>
<organismHost>
    <name type="scientific">Nicotiana tabacum</name>
    <name type="common">Common tobacco</name>
    <dbReference type="NCBI Taxonomy" id="4097"/>
</organismHost>
<organismHost>
    <name type="scientific">Solanum lycopersicum</name>
    <name type="common">Tomato</name>
    <name type="synonym">Lycopersicon esculentum</name>
    <dbReference type="NCBI Taxonomy" id="4081"/>
</organismHost>
<reference key="1">
    <citation type="journal article" date="1988" name="Gene">
        <title>Nucleotide sequence analysis of cDNA encoding the coat protein of cucumber mosaic virus: genome organization and molecular features of the protein.</title>
        <authorList>
            <person name="Hayakawa T."/>
            <person name="Hazama M."/>
            <person name="Onda H."/>
            <person name="Komiya T."/>
            <person name="Mise K."/>
            <person name="Nakayama M."/>
            <person name="Furusawa I."/>
        </authorList>
    </citation>
    <scope>NUCLEOTIDE SEQUENCE [GENOMIC RNA]</scope>
</reference>
<reference key="2">
    <citation type="journal article" date="1989" name="Nihon Shokubutsu Byori Gakkaiho">
        <title>Comparative studies on the nucleotide sequence of cucumber mosaic virus RNA3 between Y strain and Q strain.</title>
        <authorList>
            <person name="Nitta N."/>
            <person name="Masuta C."/>
            <person name="Kuwata S."/>
            <person name="Takanami Y."/>
        </authorList>
    </citation>
    <scope>NUCLEOTIDE SEQUENCE [GENOMIC RNA]</scope>
</reference>
<reference key="3">
    <citation type="journal article" date="1997" name="J. Virol.">
        <title>Deletion of the C-terminal 33 amino acids of cucumber mosaic virus movement protein enables a chimeric brome mosaic virus to move from cell to cell.</title>
        <authorList>
            <person name="Nagano H."/>
            <person name="Okuno T."/>
            <person name="Mise K."/>
            <person name="Furusawa I."/>
        </authorList>
    </citation>
    <scope>NUCLEOTIDE SEQUENCE [GENOMIC RNA]</scope>
</reference>
<reference key="4">
    <citation type="journal article" date="1985" name="J. Biochem.">
        <title>Messenger RNA structure participating in the initiation of synthesis of cucumber mosaic virus coat protein.</title>
        <authorList>
            <person name="Hidaka S."/>
            <person name="Tsunasawa S."/>
            <person name="Yoon J.O."/>
            <person name="Narita K."/>
            <person name="Takanami Y."/>
            <person name="Kubo S."/>
            <person name="Miura K.I."/>
        </authorList>
    </citation>
    <scope>NUCLEOTIDE SEQUENCE [MRNA] OF 1-10</scope>
    <scope>ACETYLATION AT MET-1</scope>
</reference>
<keyword id="KW-0007">Acetylation</keyword>
<keyword id="KW-0167">Capsid protein</keyword>
<keyword id="KW-0687">Ribonucleoprotein</keyword>
<keyword id="KW-0694">RNA-binding</keyword>
<keyword id="KW-1142">T=3 icosahedral capsid protein</keyword>
<keyword id="KW-0543">Viral nucleoprotein</keyword>
<keyword id="KW-0946">Virion</keyword>
<gene>
    <name type="ORF">ORF3b</name>
</gene>
<name>CAPSD_CMVY</name>
<accession>P18027</accession>
<accession>O12518</accession>
<accession>O12807</accession>
<accession>Q66268</accession>
<evidence type="ECO:0000250" key="1"/>
<evidence type="ECO:0000256" key="2">
    <source>
        <dbReference type="SAM" id="MobiDB-lite"/>
    </source>
</evidence>
<evidence type="ECO:0000269" key="3">
    <source>
    </source>
</evidence>
<evidence type="ECO:0000305" key="4"/>
<sequence length="218" mass="24271">MDKSESTSAGRNRRRRLRRGSRSASSSSDANFRVLSQQLSRLNKTLAAGRPTINHPTFVGSERCKPGYTFTSITLRPPKIDRESYYGKRLLLPDSVMEYDKKLVSRIQIRVNPLPKFDSTVWVTVRKVSASSDLSVAAISAMFADGASPVLVYQYAASGVQANNKLLYDLSAMRADIGDMRKYAVLVYSKDDTLETDELVLHVDVEHQRIPTSGVLPV</sequence>